<proteinExistence type="inferred from homology"/>
<sequence>MMESRHAQRKNEHLSLAAKYYDQVHQHHYFDQVRLIHDSLPEMTTDDVDLHVQLADNLEIECPFYIEAMTGGSDQALKINRQLAQLAHKHHLAMATGSLSIISKDPQSFSSFEIIREENPDGIIFANLSANASLDQAINAISLLKANALELHINAAQELIMPEGDRDFNWLDNIQYLVSELEVPVIVKEVGFGMSKTTIAKLQTHDVHLINVSGRGGTNFAAIENRRNHDINFESLLDWGQTTPESLLEAHSIRRGKTEIIASGGITSPLDVIKAGVLGARAVGVAGYFLNILQNEGYEALDQTLGEWQVIVKRLLALLGCSSFTVLSRVEYVLGTDLLSYARQRHLR</sequence>
<evidence type="ECO:0000255" key="1">
    <source>
        <dbReference type="HAMAP-Rule" id="MF_00354"/>
    </source>
</evidence>
<name>IDI2_LIMRD</name>
<feature type="chain" id="PRO_1000059836" description="Isopentenyl-diphosphate delta-isomerase">
    <location>
        <begin position="1"/>
        <end position="348"/>
    </location>
</feature>
<feature type="binding site" evidence="1">
    <location>
        <begin position="9"/>
        <end position="10"/>
    </location>
    <ligand>
        <name>substrate</name>
    </ligand>
</feature>
<feature type="binding site" evidence="1">
    <location>
        <begin position="68"/>
        <end position="70"/>
    </location>
    <ligand>
        <name>FMN</name>
        <dbReference type="ChEBI" id="CHEBI:58210"/>
    </ligand>
</feature>
<feature type="binding site" evidence="1">
    <location>
        <position position="98"/>
    </location>
    <ligand>
        <name>FMN</name>
        <dbReference type="ChEBI" id="CHEBI:58210"/>
    </ligand>
</feature>
<feature type="binding site" evidence="1">
    <location>
        <position position="127"/>
    </location>
    <ligand>
        <name>FMN</name>
        <dbReference type="ChEBI" id="CHEBI:58210"/>
    </ligand>
</feature>
<feature type="binding site" evidence="1">
    <location>
        <position position="157"/>
    </location>
    <ligand>
        <name>substrate</name>
    </ligand>
</feature>
<feature type="binding site" evidence="1">
    <location>
        <position position="158"/>
    </location>
    <ligand>
        <name>Mg(2+)</name>
        <dbReference type="ChEBI" id="CHEBI:18420"/>
    </ligand>
</feature>
<feature type="binding site" evidence="1">
    <location>
        <position position="188"/>
    </location>
    <ligand>
        <name>FMN</name>
        <dbReference type="ChEBI" id="CHEBI:58210"/>
    </ligand>
</feature>
<feature type="binding site" evidence="1">
    <location>
        <position position="213"/>
    </location>
    <ligand>
        <name>FMN</name>
        <dbReference type="ChEBI" id="CHEBI:58210"/>
    </ligand>
</feature>
<feature type="binding site" evidence="1">
    <location>
        <position position="218"/>
    </location>
    <ligand>
        <name>FMN</name>
        <dbReference type="ChEBI" id="CHEBI:58210"/>
    </ligand>
</feature>
<feature type="binding site" evidence="1">
    <location>
        <begin position="286"/>
        <end position="287"/>
    </location>
    <ligand>
        <name>FMN</name>
        <dbReference type="ChEBI" id="CHEBI:58210"/>
    </ligand>
</feature>
<reference key="1">
    <citation type="journal article" date="2011" name="PLoS Genet.">
        <title>The evolution of host specialization in the vertebrate gut symbiont Lactobacillus reuteri.</title>
        <authorList>
            <person name="Frese S.A."/>
            <person name="Benson A.K."/>
            <person name="Tannock G.W."/>
            <person name="Loach D.M."/>
            <person name="Kim J."/>
            <person name="Zhang M."/>
            <person name="Oh P.L."/>
            <person name="Heng N.C."/>
            <person name="Patil P.B."/>
            <person name="Juge N."/>
            <person name="Mackenzie D.A."/>
            <person name="Pearson B.M."/>
            <person name="Lapidus A."/>
            <person name="Dalin E."/>
            <person name="Tice H."/>
            <person name="Goltsman E."/>
            <person name="Land M."/>
            <person name="Hauser L."/>
            <person name="Ivanova N."/>
            <person name="Kyrpides N.C."/>
            <person name="Walter J."/>
        </authorList>
    </citation>
    <scope>NUCLEOTIDE SEQUENCE [LARGE SCALE GENOMIC DNA]</scope>
    <source>
        <strain>DSM 20016</strain>
    </source>
</reference>
<organism>
    <name type="scientific">Limosilactobacillus reuteri (strain DSM 20016)</name>
    <name type="common">Lactobacillus reuteri</name>
    <dbReference type="NCBI Taxonomy" id="557436"/>
    <lineage>
        <taxon>Bacteria</taxon>
        <taxon>Bacillati</taxon>
        <taxon>Bacillota</taxon>
        <taxon>Bacilli</taxon>
        <taxon>Lactobacillales</taxon>
        <taxon>Lactobacillaceae</taxon>
        <taxon>Limosilactobacillus</taxon>
    </lineage>
</organism>
<protein>
    <recommendedName>
        <fullName evidence="1">Isopentenyl-diphosphate delta-isomerase</fullName>
        <shortName evidence="1">IPP isomerase</shortName>
        <ecNumber evidence="1">5.3.3.2</ecNumber>
    </recommendedName>
    <alternativeName>
        <fullName evidence="1">Isopentenyl diphosphate:dimethylallyl diphosphate isomerase</fullName>
    </alternativeName>
    <alternativeName>
        <fullName evidence="1">Isopentenyl pyrophosphate isomerase</fullName>
    </alternativeName>
    <alternativeName>
        <fullName evidence="1">Type 2 isopentenyl diphosphate isomerase</fullName>
        <shortName evidence="1">IDI-2</shortName>
    </alternativeName>
</protein>
<gene>
    <name evidence="1" type="primary">fni</name>
    <name type="ordered locus">Lreu_0912</name>
</gene>
<dbReference type="EC" id="5.3.3.2" evidence="1"/>
<dbReference type="EMBL" id="CP000705">
    <property type="protein sequence ID" value="ABQ83174.1"/>
    <property type="molecule type" value="Genomic_DNA"/>
</dbReference>
<dbReference type="RefSeq" id="WP_011953464.1">
    <property type="nucleotide sequence ID" value="NC_009513.1"/>
</dbReference>
<dbReference type="SMR" id="A5VK00"/>
<dbReference type="STRING" id="557436.Lreu_0912"/>
<dbReference type="KEGG" id="lre:Lreu_0912"/>
<dbReference type="PATRIC" id="fig|557436.4.peg.921"/>
<dbReference type="eggNOG" id="COG1304">
    <property type="taxonomic scope" value="Bacteria"/>
</dbReference>
<dbReference type="HOGENOM" id="CLU_065515_0_0_9"/>
<dbReference type="Proteomes" id="UP000001991">
    <property type="component" value="Chromosome"/>
</dbReference>
<dbReference type="GO" id="GO:0005737">
    <property type="term" value="C:cytoplasm"/>
    <property type="evidence" value="ECO:0007669"/>
    <property type="project" value="UniProtKB-SubCell"/>
</dbReference>
<dbReference type="GO" id="GO:0010181">
    <property type="term" value="F:FMN binding"/>
    <property type="evidence" value="ECO:0007669"/>
    <property type="project" value="UniProtKB-UniRule"/>
</dbReference>
<dbReference type="GO" id="GO:0004452">
    <property type="term" value="F:isopentenyl-diphosphate delta-isomerase activity"/>
    <property type="evidence" value="ECO:0007669"/>
    <property type="project" value="UniProtKB-UniRule"/>
</dbReference>
<dbReference type="GO" id="GO:0000287">
    <property type="term" value="F:magnesium ion binding"/>
    <property type="evidence" value="ECO:0007669"/>
    <property type="project" value="UniProtKB-UniRule"/>
</dbReference>
<dbReference type="GO" id="GO:0070402">
    <property type="term" value="F:NADPH binding"/>
    <property type="evidence" value="ECO:0007669"/>
    <property type="project" value="UniProtKB-UniRule"/>
</dbReference>
<dbReference type="GO" id="GO:0016491">
    <property type="term" value="F:oxidoreductase activity"/>
    <property type="evidence" value="ECO:0007669"/>
    <property type="project" value="InterPro"/>
</dbReference>
<dbReference type="GO" id="GO:0008299">
    <property type="term" value="P:isoprenoid biosynthetic process"/>
    <property type="evidence" value="ECO:0007669"/>
    <property type="project" value="UniProtKB-UniRule"/>
</dbReference>
<dbReference type="CDD" id="cd02811">
    <property type="entry name" value="IDI-2_FMN"/>
    <property type="match status" value="1"/>
</dbReference>
<dbReference type="Gene3D" id="3.20.20.70">
    <property type="entry name" value="Aldolase class I"/>
    <property type="match status" value="1"/>
</dbReference>
<dbReference type="HAMAP" id="MF_00354">
    <property type="entry name" value="Idi_2"/>
    <property type="match status" value="1"/>
</dbReference>
<dbReference type="InterPro" id="IPR013785">
    <property type="entry name" value="Aldolase_TIM"/>
</dbReference>
<dbReference type="InterPro" id="IPR000262">
    <property type="entry name" value="FMN-dep_DH"/>
</dbReference>
<dbReference type="InterPro" id="IPR011179">
    <property type="entry name" value="IPdP_isomerase"/>
</dbReference>
<dbReference type="NCBIfam" id="TIGR02151">
    <property type="entry name" value="IPP_isom_2"/>
    <property type="match status" value="1"/>
</dbReference>
<dbReference type="PANTHER" id="PTHR43665">
    <property type="entry name" value="ISOPENTENYL-DIPHOSPHATE DELTA-ISOMERASE"/>
    <property type="match status" value="1"/>
</dbReference>
<dbReference type="PANTHER" id="PTHR43665:SF1">
    <property type="entry name" value="ISOPENTENYL-DIPHOSPHATE DELTA-ISOMERASE"/>
    <property type="match status" value="1"/>
</dbReference>
<dbReference type="Pfam" id="PF01070">
    <property type="entry name" value="FMN_dh"/>
    <property type="match status" value="1"/>
</dbReference>
<dbReference type="PIRSF" id="PIRSF003314">
    <property type="entry name" value="IPP_isomerase"/>
    <property type="match status" value="1"/>
</dbReference>
<dbReference type="SUPFAM" id="SSF51395">
    <property type="entry name" value="FMN-linked oxidoreductases"/>
    <property type="match status" value="1"/>
</dbReference>
<comment type="function">
    <text evidence="1">Involved in the biosynthesis of isoprenoids. Catalyzes the 1,3-allylic rearrangement of the homoallylic substrate isopentenyl (IPP) to its allylic isomer, dimethylallyl diphosphate (DMAPP).</text>
</comment>
<comment type="catalytic activity">
    <reaction evidence="1">
        <text>isopentenyl diphosphate = dimethylallyl diphosphate</text>
        <dbReference type="Rhea" id="RHEA:23284"/>
        <dbReference type="ChEBI" id="CHEBI:57623"/>
        <dbReference type="ChEBI" id="CHEBI:128769"/>
        <dbReference type="EC" id="5.3.3.2"/>
    </reaction>
</comment>
<comment type="cofactor">
    <cofactor evidence="1">
        <name>FMN</name>
        <dbReference type="ChEBI" id="CHEBI:58210"/>
    </cofactor>
</comment>
<comment type="cofactor">
    <cofactor evidence="1">
        <name>NADPH</name>
        <dbReference type="ChEBI" id="CHEBI:57783"/>
    </cofactor>
</comment>
<comment type="cofactor">
    <cofactor evidence="1">
        <name>Mg(2+)</name>
        <dbReference type="ChEBI" id="CHEBI:18420"/>
    </cofactor>
</comment>
<comment type="subunit">
    <text evidence="1">Homooctamer. Dimer of tetramers.</text>
</comment>
<comment type="subcellular location">
    <subcellularLocation>
        <location evidence="1">Cytoplasm</location>
    </subcellularLocation>
</comment>
<comment type="similarity">
    <text evidence="1">Belongs to the IPP isomerase type 2 family.</text>
</comment>
<accession>A5VK00</accession>
<keyword id="KW-0963">Cytoplasm</keyword>
<keyword id="KW-0285">Flavoprotein</keyword>
<keyword id="KW-0288">FMN</keyword>
<keyword id="KW-0413">Isomerase</keyword>
<keyword id="KW-0414">Isoprene biosynthesis</keyword>
<keyword id="KW-0460">Magnesium</keyword>
<keyword id="KW-0479">Metal-binding</keyword>
<keyword id="KW-0521">NADP</keyword>
<keyword id="KW-1185">Reference proteome</keyword>